<evidence type="ECO:0000255" key="1">
    <source>
        <dbReference type="HAMAP-Rule" id="MF_01075"/>
    </source>
</evidence>
<evidence type="ECO:0000305" key="2"/>
<organism>
    <name type="scientific">Escherichia coli O1:K1 / APEC</name>
    <dbReference type="NCBI Taxonomy" id="405955"/>
    <lineage>
        <taxon>Bacteria</taxon>
        <taxon>Pseudomonadati</taxon>
        <taxon>Pseudomonadota</taxon>
        <taxon>Gammaproteobacteria</taxon>
        <taxon>Enterobacterales</taxon>
        <taxon>Enterobacteriaceae</taxon>
        <taxon>Escherichia</taxon>
    </lineage>
</organism>
<proteinExistence type="inferred from homology"/>
<accession>A1AAB4</accession>
<reference key="1">
    <citation type="journal article" date="2007" name="J. Bacteriol.">
        <title>The genome sequence of avian pathogenic Escherichia coli strain O1:K1:H7 shares strong similarities with human extraintestinal pathogenic E. coli genomes.</title>
        <authorList>
            <person name="Johnson T.J."/>
            <person name="Kariyawasam S."/>
            <person name="Wannemuehler Y."/>
            <person name="Mangiamele P."/>
            <person name="Johnson S.J."/>
            <person name="Doetkott C."/>
            <person name="Skyberg J.A."/>
            <person name="Lynne A.M."/>
            <person name="Johnson J.R."/>
            <person name="Nolan L.K."/>
        </authorList>
    </citation>
    <scope>NUCLEOTIDE SEQUENCE [LARGE SCALE GENOMIC DNA]</scope>
</reference>
<comment type="function">
    <text evidence="1">K(+)/H(+) antiporter that extrudes potassium in exchange for external protons and maintains the internal concentration of potassium under toxic levels.</text>
</comment>
<comment type="catalytic activity">
    <reaction evidence="1">
        <text>K(+)(in) + H(+)(out) = K(+)(out) + H(+)(in)</text>
        <dbReference type="Rhea" id="RHEA:29467"/>
        <dbReference type="ChEBI" id="CHEBI:15378"/>
        <dbReference type="ChEBI" id="CHEBI:29103"/>
    </reaction>
    <physiologicalReaction direction="left-to-right" evidence="1">
        <dbReference type="Rhea" id="RHEA:29468"/>
    </physiologicalReaction>
</comment>
<comment type="subcellular location">
    <subcellularLocation>
        <location evidence="1">Cell inner membrane</location>
        <topology evidence="1">Multi-pass membrane protein</topology>
    </subcellularLocation>
</comment>
<comment type="similarity">
    <text evidence="1">Belongs to the monovalent cation:proton antiporter 1 (CPA1) transporter (TC 2.A.36) family. NhaP2 subfamily.</text>
</comment>
<comment type="sequence caution" evidence="2">
    <conflict type="erroneous initiation">
        <sequence resource="EMBL-CDS" id="ABJ00604"/>
    </conflict>
</comment>
<feature type="chain" id="PRO_0000278149" description="K(+)/H(+) antiporter NhaP2">
    <location>
        <begin position="1"/>
        <end position="578"/>
    </location>
</feature>
<feature type="transmembrane region" description="Helical" evidence="1">
    <location>
        <begin position="6"/>
        <end position="26"/>
    </location>
</feature>
<feature type="transmembrane region" description="Helical" evidence="1">
    <location>
        <begin position="30"/>
        <end position="50"/>
    </location>
</feature>
<feature type="transmembrane region" description="Helical" evidence="1">
    <location>
        <begin position="58"/>
        <end position="78"/>
    </location>
</feature>
<feature type="transmembrane region" description="Helical" evidence="1">
    <location>
        <begin position="87"/>
        <end position="107"/>
    </location>
</feature>
<feature type="transmembrane region" description="Helical" evidence="1">
    <location>
        <begin position="109"/>
        <end position="129"/>
    </location>
</feature>
<feature type="transmembrane region" description="Helical" evidence="1">
    <location>
        <begin position="156"/>
        <end position="176"/>
    </location>
</feature>
<feature type="transmembrane region" description="Helical" evidence="1">
    <location>
        <begin position="185"/>
        <end position="205"/>
    </location>
</feature>
<feature type="transmembrane region" description="Helical" evidence="1">
    <location>
        <begin position="216"/>
        <end position="236"/>
    </location>
</feature>
<feature type="transmembrane region" description="Helical" evidence="1">
    <location>
        <begin position="237"/>
        <end position="257"/>
    </location>
</feature>
<feature type="transmembrane region" description="Helical" evidence="1">
    <location>
        <begin position="270"/>
        <end position="290"/>
    </location>
</feature>
<feature type="transmembrane region" description="Helical" evidence="1">
    <location>
        <begin position="293"/>
        <end position="313"/>
    </location>
</feature>
<feature type="transmembrane region" description="Helical" evidence="1">
    <location>
        <begin position="334"/>
        <end position="354"/>
    </location>
</feature>
<feature type="transmembrane region" description="Helical" evidence="1">
    <location>
        <begin position="363"/>
        <end position="383"/>
    </location>
</feature>
<feature type="domain" description="RCK C-terminal" evidence="1">
    <location>
        <begin position="403"/>
        <end position="485"/>
    </location>
</feature>
<dbReference type="EMBL" id="CP000468">
    <property type="protein sequence ID" value="ABJ00604.1"/>
    <property type="status" value="ALT_INIT"/>
    <property type="molecule type" value="Genomic_DNA"/>
</dbReference>
<dbReference type="RefSeq" id="WP_000340206.1">
    <property type="nucleotide sequence ID" value="NZ_CADILS010000001.1"/>
</dbReference>
<dbReference type="SMR" id="A1AAB4"/>
<dbReference type="KEGG" id="ecv:APECO1_303"/>
<dbReference type="HOGENOM" id="CLU_005912_9_2_6"/>
<dbReference type="Proteomes" id="UP000008216">
    <property type="component" value="Chromosome"/>
</dbReference>
<dbReference type="GO" id="GO:0005886">
    <property type="term" value="C:plasma membrane"/>
    <property type="evidence" value="ECO:0007669"/>
    <property type="project" value="UniProtKB-SubCell"/>
</dbReference>
<dbReference type="GO" id="GO:0050660">
    <property type="term" value="F:flavin adenine dinucleotide binding"/>
    <property type="evidence" value="ECO:0007669"/>
    <property type="project" value="InterPro"/>
</dbReference>
<dbReference type="GO" id="GO:0015386">
    <property type="term" value="F:potassium:proton antiporter activity"/>
    <property type="evidence" value="ECO:0007669"/>
    <property type="project" value="UniProtKB-UniRule"/>
</dbReference>
<dbReference type="GO" id="GO:0006884">
    <property type="term" value="P:cell volume homeostasis"/>
    <property type="evidence" value="ECO:0007669"/>
    <property type="project" value="InterPro"/>
</dbReference>
<dbReference type="FunFam" id="1.20.1530.20:FF:000002">
    <property type="entry name" value="K(+)/H(+) antiporter NhaP2"/>
    <property type="match status" value="1"/>
</dbReference>
<dbReference type="FunFam" id="3.30.465.10:FF:000009">
    <property type="entry name" value="K(+)/H(+) antiporter NhaP2"/>
    <property type="match status" value="1"/>
</dbReference>
<dbReference type="FunFam" id="3.30.70.1450:FF:000007">
    <property type="entry name" value="K(+)/H(+) antiporter NhaP2"/>
    <property type="match status" value="1"/>
</dbReference>
<dbReference type="Gene3D" id="1.20.1530.20">
    <property type="match status" value="1"/>
</dbReference>
<dbReference type="Gene3D" id="3.30.465.10">
    <property type="match status" value="1"/>
</dbReference>
<dbReference type="Gene3D" id="3.30.70.1450">
    <property type="entry name" value="Regulator of K+ conductance, C-terminal domain"/>
    <property type="match status" value="1"/>
</dbReference>
<dbReference type="HAMAP" id="MF_01075">
    <property type="entry name" value="NhaP2"/>
    <property type="match status" value="1"/>
</dbReference>
<dbReference type="InterPro" id="IPR006153">
    <property type="entry name" value="Cation/H_exchanger_TM"/>
</dbReference>
<dbReference type="InterPro" id="IPR036318">
    <property type="entry name" value="FAD-bd_PCMH-like_sf"/>
</dbReference>
<dbReference type="InterPro" id="IPR016169">
    <property type="entry name" value="FAD-bd_PCMH_sub2"/>
</dbReference>
<dbReference type="InterPro" id="IPR038770">
    <property type="entry name" value="Na+/solute_symporter_sf"/>
</dbReference>
<dbReference type="InterPro" id="IPR023729">
    <property type="entry name" value="NhaP2"/>
</dbReference>
<dbReference type="InterPro" id="IPR006037">
    <property type="entry name" value="RCK_C"/>
</dbReference>
<dbReference type="InterPro" id="IPR036721">
    <property type="entry name" value="RCK_C_sf"/>
</dbReference>
<dbReference type="InterPro" id="IPR005170">
    <property type="entry name" value="Transptr-assoc_dom"/>
</dbReference>
<dbReference type="NCBIfam" id="NF003714">
    <property type="entry name" value="PRK05326.1-1"/>
    <property type="match status" value="1"/>
</dbReference>
<dbReference type="NCBIfam" id="NF003715">
    <property type="entry name" value="PRK05326.1-2"/>
    <property type="match status" value="1"/>
</dbReference>
<dbReference type="NCBIfam" id="NF003716">
    <property type="entry name" value="PRK05326.1-3"/>
    <property type="match status" value="1"/>
</dbReference>
<dbReference type="PANTHER" id="PTHR32507:SF7">
    <property type="entry name" value="K(+)_H(+) ANTIPORTER NHAP2"/>
    <property type="match status" value="1"/>
</dbReference>
<dbReference type="PANTHER" id="PTHR32507">
    <property type="entry name" value="NA(+)/H(+) ANTIPORTER 1"/>
    <property type="match status" value="1"/>
</dbReference>
<dbReference type="Pfam" id="PF03471">
    <property type="entry name" value="CorC_HlyC"/>
    <property type="match status" value="1"/>
</dbReference>
<dbReference type="Pfam" id="PF00999">
    <property type="entry name" value="Na_H_Exchanger"/>
    <property type="match status" value="1"/>
</dbReference>
<dbReference type="Pfam" id="PF02080">
    <property type="entry name" value="TrkA_C"/>
    <property type="match status" value="1"/>
</dbReference>
<dbReference type="SMART" id="SM01091">
    <property type="entry name" value="CorC_HlyC"/>
    <property type="match status" value="1"/>
</dbReference>
<dbReference type="SUPFAM" id="SSF56176">
    <property type="entry name" value="FAD-binding/transporter-associated domain-like"/>
    <property type="match status" value="1"/>
</dbReference>
<dbReference type="SUPFAM" id="SSF116726">
    <property type="entry name" value="TrkA C-terminal domain-like"/>
    <property type="match status" value="1"/>
</dbReference>
<dbReference type="PROSITE" id="PS51202">
    <property type="entry name" value="RCK_C"/>
    <property type="match status" value="1"/>
</dbReference>
<protein>
    <recommendedName>
        <fullName evidence="1">K(+)/H(+) antiporter NhaP2</fullName>
    </recommendedName>
    <alternativeName>
        <fullName evidence="1">Potassium/proton antiporter NhaP2</fullName>
    </alternativeName>
</protein>
<name>NHAP2_ECOK1</name>
<sequence>MDATTIISLFILGSILVTSSILLSSFSSRLGIPILVIFLAIGMLAGVDGVGGIPFDNYPFAYMVSNLALAIILLDGGMRTQASSFRVALGPALSLATLGVLITSGLTGMMAAWLFNLDLIEGLLIGAIVGSTDAAAVFSLLGGKGLNERVGSTLEIESGSNDPMAVFLTITLIAMIQQHESSVSWMFVVDILQQFGLGIVIGLGGGYLLLQMINRIALPAGLYPLLALSGGILIFALTTALEGSGILAVYLCGFLLGNRPIRNRYGILQNFDGLAWLAQIAMFLVLGLLVNPSDLLPIAIPALILSAWMIFFARPLSVFAGLLPFRGFNLRERVFISWVGLRGAVPIILAVFPMMAGLENARLFFNVAFFVVLVSLLLQGTSLSWAAKKAKVVVPPVGRPVSRVGLDIHPENPWEQFVYQLSADKWCVGAALRDLHMPKETRIAALFRDNQLLHPTGSTRLREGDVLCVIGRERDLPALGKLFSQSPPVALDQRFFGDFILEASAKYADVALIYGLEDGREYRDKQQTLGEIVQQLLGAAPVVGDQVEFAGMIWTVAEKEDNEVLKIGVRVAEEEAES</sequence>
<keyword id="KW-0050">Antiport</keyword>
<keyword id="KW-0997">Cell inner membrane</keyword>
<keyword id="KW-1003">Cell membrane</keyword>
<keyword id="KW-0406">Ion transport</keyword>
<keyword id="KW-0472">Membrane</keyword>
<keyword id="KW-0630">Potassium</keyword>
<keyword id="KW-0633">Potassium transport</keyword>
<keyword id="KW-1185">Reference proteome</keyword>
<keyword id="KW-0812">Transmembrane</keyword>
<keyword id="KW-1133">Transmembrane helix</keyword>
<keyword id="KW-0813">Transport</keyword>
<gene>
    <name evidence="1" type="primary">nhaP2</name>
    <name type="synonym">cvrA</name>
    <name type="ordered locus">Ecok1_11100</name>
    <name type="ORF">APECO1_303</name>
</gene>